<comment type="function">
    <text evidence="5 7">Endoribonuclease that cleaves single-stranded RNAs at 5' of uridylates and releases a product with a 2',3'-cyclic phosphate at the 3'-end. The UU and GU sites are more efficiently cleaved than CU and AU sites (PubMed:18936097). Targets mRNAs to regulate their expression (PubMed:37803019).</text>
</comment>
<comment type="catalytic activity">
    <reaction evidence="5">
        <text>ribonucleotidyl-uridine-RNA = a 5'-end dephospho-uridine-RNA + a 3'-end 2',3'-cyclophospho-ribonucleotide-RNA</text>
        <dbReference type="Rhea" id="RHEA:67792"/>
        <dbReference type="Rhea" id="RHEA-COMP:10464"/>
        <dbReference type="Rhea" id="RHEA-COMP:17354"/>
        <dbReference type="Rhea" id="RHEA-COMP:17356"/>
        <dbReference type="ChEBI" id="CHEBI:83064"/>
        <dbReference type="ChEBI" id="CHEBI:173117"/>
        <dbReference type="ChEBI" id="CHEBI:173224"/>
    </reaction>
    <physiologicalReaction direction="left-to-right" evidence="12">
        <dbReference type="Rhea" id="RHEA:67793"/>
    </physiologicalReaction>
</comment>
<comment type="cofactor">
    <cofactor evidence="5">
        <name>Mn(2+)</name>
        <dbReference type="ChEBI" id="CHEBI:29035"/>
    </cofactor>
</comment>
<comment type="subunit">
    <text evidence="1">Monomer.</text>
</comment>
<comment type="subcellular location">
    <subcellularLocation>
        <location evidence="11">Secreted</location>
    </subcellularLocation>
</comment>
<comment type="alternative products">
    <event type="alternative splicing"/>
    <isoform>
        <id>P21128-1</id>
        <name>1</name>
        <sequence type="displayed"/>
    </isoform>
    <isoform>
        <id>P21128-2</id>
        <name>2</name>
        <sequence type="described" ref="VSP_039216"/>
    </isoform>
    <isoform>
        <id>P21128-3</id>
        <name>3</name>
        <sequence type="described" ref="VSP_039215"/>
    </isoform>
</comment>
<comment type="tissue specificity">
    <text>Placental-specific, but also associated with various malignant neoplasms.</text>
</comment>
<comment type="PTM">
    <text>It has been suggested that the active SMB domain may be permitted considerable disulfide bond heterogeneity or variability, thus two alternate disulfide patterns based on 3D structures are described with 1 disulfide bond conserved in both.</text>
</comment>
<comment type="similarity">
    <text evidence="4">Belongs to the ENDOU family.</text>
</comment>
<comment type="caution">
    <text evidence="13">Was originally (PubMed:2350438) thought to be a serine protease. However, PubMed:18936097 showed it is not the case.</text>
</comment>
<protein>
    <recommendedName>
        <fullName evidence="12">Uridylate-specific endoribonuclease</fullName>
        <ecNumber evidence="4">3.1.-.-</ecNumber>
        <ecNumber evidence="5">4.6.1.-</ecNumber>
    </recommendedName>
    <alternativeName>
        <fullName>Placental protein 11</fullName>
        <shortName>PP11</shortName>
    </alternativeName>
    <alternativeName>
        <fullName>Protein endoU</fullName>
    </alternativeName>
</protein>
<reference key="1">
    <citation type="journal article" date="1990" name="DNA Cell Biol.">
        <title>Cloning and expression of a cDNA encoding human placental protein 11, a putative serine protease with diagnostic significance as a tumor marker.</title>
        <authorList>
            <person name="Grundmann U."/>
            <person name="Roemisch J."/>
            <person name="Siebold B."/>
            <person name="Bohn H."/>
            <person name="Amann E."/>
        </authorList>
    </citation>
    <scope>NUCLEOTIDE SEQUENCE [MRNA] (ISOFORM 2)</scope>
    <scope>PROTEIN SEQUENCE OF N-TERMINUS</scope>
    <source>
        <tissue>Placenta</tissue>
    </source>
</reference>
<reference key="2">
    <citation type="journal article" date="2004" name="Nat. Genet.">
        <title>Complete sequencing and characterization of 21,243 full-length human cDNAs.</title>
        <authorList>
            <person name="Ota T."/>
            <person name="Suzuki Y."/>
            <person name="Nishikawa T."/>
            <person name="Otsuki T."/>
            <person name="Sugiyama T."/>
            <person name="Irie R."/>
            <person name="Wakamatsu A."/>
            <person name="Hayashi K."/>
            <person name="Sato H."/>
            <person name="Nagai K."/>
            <person name="Kimura K."/>
            <person name="Makita H."/>
            <person name="Sekine M."/>
            <person name="Obayashi M."/>
            <person name="Nishi T."/>
            <person name="Shibahara T."/>
            <person name="Tanaka T."/>
            <person name="Ishii S."/>
            <person name="Yamamoto J."/>
            <person name="Saito K."/>
            <person name="Kawai Y."/>
            <person name="Isono Y."/>
            <person name="Nakamura Y."/>
            <person name="Nagahari K."/>
            <person name="Murakami K."/>
            <person name="Yasuda T."/>
            <person name="Iwayanagi T."/>
            <person name="Wagatsuma M."/>
            <person name="Shiratori A."/>
            <person name="Sudo H."/>
            <person name="Hosoiri T."/>
            <person name="Kaku Y."/>
            <person name="Kodaira H."/>
            <person name="Kondo H."/>
            <person name="Sugawara M."/>
            <person name="Takahashi M."/>
            <person name="Kanda K."/>
            <person name="Yokoi T."/>
            <person name="Furuya T."/>
            <person name="Kikkawa E."/>
            <person name="Omura Y."/>
            <person name="Abe K."/>
            <person name="Kamihara K."/>
            <person name="Katsuta N."/>
            <person name="Sato K."/>
            <person name="Tanikawa M."/>
            <person name="Yamazaki M."/>
            <person name="Ninomiya K."/>
            <person name="Ishibashi T."/>
            <person name="Yamashita H."/>
            <person name="Murakawa K."/>
            <person name="Fujimori K."/>
            <person name="Tanai H."/>
            <person name="Kimata M."/>
            <person name="Watanabe M."/>
            <person name="Hiraoka S."/>
            <person name="Chiba Y."/>
            <person name="Ishida S."/>
            <person name="Ono Y."/>
            <person name="Takiguchi S."/>
            <person name="Watanabe S."/>
            <person name="Yosida M."/>
            <person name="Hotuta T."/>
            <person name="Kusano J."/>
            <person name="Kanehori K."/>
            <person name="Takahashi-Fujii A."/>
            <person name="Hara H."/>
            <person name="Tanase T.-O."/>
            <person name="Nomura Y."/>
            <person name="Togiya S."/>
            <person name="Komai F."/>
            <person name="Hara R."/>
            <person name="Takeuchi K."/>
            <person name="Arita M."/>
            <person name="Imose N."/>
            <person name="Musashino K."/>
            <person name="Yuuki H."/>
            <person name="Oshima A."/>
            <person name="Sasaki N."/>
            <person name="Aotsuka S."/>
            <person name="Yoshikawa Y."/>
            <person name="Matsunawa H."/>
            <person name="Ichihara T."/>
            <person name="Shiohata N."/>
            <person name="Sano S."/>
            <person name="Moriya S."/>
            <person name="Momiyama H."/>
            <person name="Satoh N."/>
            <person name="Takami S."/>
            <person name="Terashima Y."/>
            <person name="Suzuki O."/>
            <person name="Nakagawa S."/>
            <person name="Senoh A."/>
            <person name="Mizoguchi H."/>
            <person name="Goto Y."/>
            <person name="Shimizu F."/>
            <person name="Wakebe H."/>
            <person name="Hishigaki H."/>
            <person name="Watanabe T."/>
            <person name="Sugiyama A."/>
            <person name="Takemoto M."/>
            <person name="Kawakami B."/>
            <person name="Yamazaki M."/>
            <person name="Watanabe K."/>
            <person name="Kumagai A."/>
            <person name="Itakura S."/>
            <person name="Fukuzumi Y."/>
            <person name="Fujimori Y."/>
            <person name="Komiyama M."/>
            <person name="Tashiro H."/>
            <person name="Tanigami A."/>
            <person name="Fujiwara T."/>
            <person name="Ono T."/>
            <person name="Yamada K."/>
            <person name="Fujii Y."/>
            <person name="Ozaki K."/>
            <person name="Hirao M."/>
            <person name="Ohmori Y."/>
            <person name="Kawabata A."/>
            <person name="Hikiji T."/>
            <person name="Kobatake N."/>
            <person name="Inagaki H."/>
            <person name="Ikema Y."/>
            <person name="Okamoto S."/>
            <person name="Okitani R."/>
            <person name="Kawakami T."/>
            <person name="Noguchi S."/>
            <person name="Itoh T."/>
            <person name="Shigeta K."/>
            <person name="Senba T."/>
            <person name="Matsumura K."/>
            <person name="Nakajima Y."/>
            <person name="Mizuno T."/>
            <person name="Morinaga M."/>
            <person name="Sasaki M."/>
            <person name="Togashi T."/>
            <person name="Oyama M."/>
            <person name="Hata H."/>
            <person name="Watanabe M."/>
            <person name="Komatsu T."/>
            <person name="Mizushima-Sugano J."/>
            <person name="Satoh T."/>
            <person name="Shirai Y."/>
            <person name="Takahashi Y."/>
            <person name="Nakagawa K."/>
            <person name="Okumura K."/>
            <person name="Nagase T."/>
            <person name="Nomura N."/>
            <person name="Kikuchi H."/>
            <person name="Masuho Y."/>
            <person name="Yamashita R."/>
            <person name="Nakai K."/>
            <person name="Yada T."/>
            <person name="Nakamura Y."/>
            <person name="Ohara O."/>
            <person name="Isogai T."/>
            <person name="Sugano S."/>
        </authorList>
    </citation>
    <scope>NUCLEOTIDE SEQUENCE [LARGE SCALE MRNA] (ISOFORMS 1; 2 AND 3)</scope>
    <source>
        <tissue>Placenta</tissue>
    </source>
</reference>
<reference key="3">
    <citation type="journal article" date="2006" name="Nature">
        <title>The finished DNA sequence of human chromosome 12.</title>
        <authorList>
            <person name="Scherer S.E."/>
            <person name="Muzny D.M."/>
            <person name="Buhay C.J."/>
            <person name="Chen R."/>
            <person name="Cree A."/>
            <person name="Ding Y."/>
            <person name="Dugan-Rocha S."/>
            <person name="Gill R."/>
            <person name="Gunaratne P."/>
            <person name="Harris R.A."/>
            <person name="Hawes A.C."/>
            <person name="Hernandez J."/>
            <person name="Hodgson A.V."/>
            <person name="Hume J."/>
            <person name="Jackson A."/>
            <person name="Khan Z.M."/>
            <person name="Kovar-Smith C."/>
            <person name="Lewis L.R."/>
            <person name="Lozado R.J."/>
            <person name="Metzker M.L."/>
            <person name="Milosavljevic A."/>
            <person name="Miner G.R."/>
            <person name="Montgomery K.T."/>
            <person name="Morgan M.B."/>
            <person name="Nazareth L.V."/>
            <person name="Scott G."/>
            <person name="Sodergren E."/>
            <person name="Song X.-Z."/>
            <person name="Steffen D."/>
            <person name="Lovering R.C."/>
            <person name="Wheeler D.A."/>
            <person name="Worley K.C."/>
            <person name="Yuan Y."/>
            <person name="Zhang Z."/>
            <person name="Adams C.Q."/>
            <person name="Ansari-Lari M.A."/>
            <person name="Ayele M."/>
            <person name="Brown M.J."/>
            <person name="Chen G."/>
            <person name="Chen Z."/>
            <person name="Clerc-Blankenburg K.P."/>
            <person name="Davis C."/>
            <person name="Delgado O."/>
            <person name="Dinh H.H."/>
            <person name="Draper H."/>
            <person name="Gonzalez-Garay M.L."/>
            <person name="Havlak P."/>
            <person name="Jackson L.R."/>
            <person name="Jacob L.S."/>
            <person name="Kelly S.H."/>
            <person name="Li L."/>
            <person name="Li Z."/>
            <person name="Liu J."/>
            <person name="Liu W."/>
            <person name="Lu J."/>
            <person name="Maheshwari M."/>
            <person name="Nguyen B.-V."/>
            <person name="Okwuonu G.O."/>
            <person name="Pasternak S."/>
            <person name="Perez L.M."/>
            <person name="Plopper F.J.H."/>
            <person name="Santibanez J."/>
            <person name="Shen H."/>
            <person name="Tabor P.E."/>
            <person name="Verduzco D."/>
            <person name="Waldron L."/>
            <person name="Wang Q."/>
            <person name="Williams G.A."/>
            <person name="Zhang J."/>
            <person name="Zhou J."/>
            <person name="Allen C.C."/>
            <person name="Amin A.G."/>
            <person name="Anyalebechi V."/>
            <person name="Bailey M."/>
            <person name="Barbaria J.A."/>
            <person name="Bimage K.E."/>
            <person name="Bryant N.P."/>
            <person name="Burch P.E."/>
            <person name="Burkett C.E."/>
            <person name="Burrell K.L."/>
            <person name="Calderon E."/>
            <person name="Cardenas V."/>
            <person name="Carter K."/>
            <person name="Casias K."/>
            <person name="Cavazos I."/>
            <person name="Cavazos S.R."/>
            <person name="Ceasar H."/>
            <person name="Chacko J."/>
            <person name="Chan S.N."/>
            <person name="Chavez D."/>
            <person name="Christopoulos C."/>
            <person name="Chu J."/>
            <person name="Cockrell R."/>
            <person name="Cox C.D."/>
            <person name="Dang M."/>
            <person name="Dathorne S.R."/>
            <person name="David R."/>
            <person name="Davis C.M."/>
            <person name="Davy-Carroll L."/>
            <person name="Deshazo D.R."/>
            <person name="Donlin J.E."/>
            <person name="D'Souza L."/>
            <person name="Eaves K.A."/>
            <person name="Egan A."/>
            <person name="Emery-Cohen A.J."/>
            <person name="Escotto M."/>
            <person name="Flagg N."/>
            <person name="Forbes L.D."/>
            <person name="Gabisi A.M."/>
            <person name="Garza M."/>
            <person name="Hamilton C."/>
            <person name="Henderson N."/>
            <person name="Hernandez O."/>
            <person name="Hines S."/>
            <person name="Hogues M.E."/>
            <person name="Huang M."/>
            <person name="Idlebird D.G."/>
            <person name="Johnson R."/>
            <person name="Jolivet A."/>
            <person name="Jones S."/>
            <person name="Kagan R."/>
            <person name="King L.M."/>
            <person name="Leal B."/>
            <person name="Lebow H."/>
            <person name="Lee S."/>
            <person name="LeVan J.M."/>
            <person name="Lewis L.C."/>
            <person name="London P."/>
            <person name="Lorensuhewa L.M."/>
            <person name="Loulseged H."/>
            <person name="Lovett D.A."/>
            <person name="Lucier A."/>
            <person name="Lucier R.L."/>
            <person name="Ma J."/>
            <person name="Madu R.C."/>
            <person name="Mapua P."/>
            <person name="Martindale A.D."/>
            <person name="Martinez E."/>
            <person name="Massey E."/>
            <person name="Mawhiney S."/>
            <person name="Meador M.G."/>
            <person name="Mendez S."/>
            <person name="Mercado C."/>
            <person name="Mercado I.C."/>
            <person name="Merritt C.E."/>
            <person name="Miner Z.L."/>
            <person name="Minja E."/>
            <person name="Mitchell T."/>
            <person name="Mohabbat F."/>
            <person name="Mohabbat K."/>
            <person name="Montgomery B."/>
            <person name="Moore N."/>
            <person name="Morris S."/>
            <person name="Munidasa M."/>
            <person name="Ngo R.N."/>
            <person name="Nguyen N.B."/>
            <person name="Nickerson E."/>
            <person name="Nwaokelemeh O.O."/>
            <person name="Nwokenkwo S."/>
            <person name="Obregon M."/>
            <person name="Oguh M."/>
            <person name="Oragunye N."/>
            <person name="Oviedo R.J."/>
            <person name="Parish B.J."/>
            <person name="Parker D.N."/>
            <person name="Parrish J."/>
            <person name="Parks K.L."/>
            <person name="Paul H.A."/>
            <person name="Payton B.A."/>
            <person name="Perez A."/>
            <person name="Perrin W."/>
            <person name="Pickens A."/>
            <person name="Primus E.L."/>
            <person name="Pu L.-L."/>
            <person name="Puazo M."/>
            <person name="Quiles M.M."/>
            <person name="Quiroz J.B."/>
            <person name="Rabata D."/>
            <person name="Reeves K."/>
            <person name="Ruiz S.J."/>
            <person name="Shao H."/>
            <person name="Sisson I."/>
            <person name="Sonaike T."/>
            <person name="Sorelle R.P."/>
            <person name="Sutton A.E."/>
            <person name="Svatek A.F."/>
            <person name="Svetz L.A."/>
            <person name="Tamerisa K.S."/>
            <person name="Taylor T.R."/>
            <person name="Teague B."/>
            <person name="Thomas N."/>
            <person name="Thorn R.D."/>
            <person name="Trejos Z.Y."/>
            <person name="Trevino B.K."/>
            <person name="Ukegbu O.N."/>
            <person name="Urban J.B."/>
            <person name="Vasquez L.I."/>
            <person name="Vera V.A."/>
            <person name="Villasana D.M."/>
            <person name="Wang L."/>
            <person name="Ward-Moore S."/>
            <person name="Warren J.T."/>
            <person name="Wei X."/>
            <person name="White F."/>
            <person name="Williamson A.L."/>
            <person name="Wleczyk R."/>
            <person name="Wooden H.S."/>
            <person name="Wooden S.H."/>
            <person name="Yen J."/>
            <person name="Yoon L."/>
            <person name="Yoon V."/>
            <person name="Zorrilla S.E."/>
            <person name="Nelson D."/>
            <person name="Kucherlapati R."/>
            <person name="Weinstock G."/>
            <person name="Gibbs R.A."/>
        </authorList>
    </citation>
    <scope>NUCLEOTIDE SEQUENCE [LARGE SCALE GENOMIC DNA]</scope>
</reference>
<reference key="4">
    <citation type="submission" date="2005-07" db="EMBL/GenBank/DDBJ databases">
        <authorList>
            <person name="Mural R.J."/>
            <person name="Istrail S."/>
            <person name="Sutton G.G."/>
            <person name="Florea L."/>
            <person name="Halpern A.L."/>
            <person name="Mobarry C.M."/>
            <person name="Lippert R."/>
            <person name="Walenz B."/>
            <person name="Shatkay H."/>
            <person name="Dew I."/>
            <person name="Miller J.R."/>
            <person name="Flanigan M.J."/>
            <person name="Edwards N.J."/>
            <person name="Bolanos R."/>
            <person name="Fasulo D."/>
            <person name="Halldorsson B.V."/>
            <person name="Hannenhalli S."/>
            <person name="Turner R."/>
            <person name="Yooseph S."/>
            <person name="Lu F."/>
            <person name="Nusskern D.R."/>
            <person name="Shue B.C."/>
            <person name="Zheng X.H."/>
            <person name="Zhong F."/>
            <person name="Delcher A.L."/>
            <person name="Huson D.H."/>
            <person name="Kravitz S.A."/>
            <person name="Mouchard L."/>
            <person name="Reinert K."/>
            <person name="Remington K.A."/>
            <person name="Clark A.G."/>
            <person name="Waterman M.S."/>
            <person name="Eichler E.E."/>
            <person name="Adams M.D."/>
            <person name="Hunkapiller M.W."/>
            <person name="Myers E.W."/>
            <person name="Venter J.C."/>
        </authorList>
    </citation>
    <scope>NUCLEOTIDE SEQUENCE [LARGE SCALE GENOMIC DNA]</scope>
</reference>
<reference key="5">
    <citation type="journal article" date="2004" name="Genome Res.">
        <title>The status, quality, and expansion of the NIH full-length cDNA project: the Mammalian Gene Collection (MGC).</title>
        <authorList>
            <consortium name="The MGC Project Team"/>
        </authorList>
    </citation>
    <scope>NUCLEOTIDE SEQUENCE [LARGE SCALE MRNA] (ISOFORM 2)</scope>
    <source>
        <tissue>Brain</tissue>
    </source>
</reference>
<reference key="6">
    <citation type="journal article" date="1991" name="Biochem. Biophys. Res. Commun.">
        <title>Homology of placental protein 11 and pea seed albumin 2 with vitronectin.</title>
        <authorList>
            <person name="Jenne D.E."/>
        </authorList>
    </citation>
    <scope>DOMAIN SOMATOMEDIN-B</scope>
</reference>
<reference key="7">
    <citation type="journal article" date="2008" name="J. Biol. Chem.">
        <title>The tumor marker human placental protein 11 is an endoribonuclease.</title>
        <authorList>
            <person name="Laneve P."/>
            <person name="Gioia U."/>
            <person name="Ragno R."/>
            <person name="Altieri F."/>
            <person name="Di Franco C."/>
            <person name="Santini T."/>
            <person name="Arceci M."/>
            <person name="Bozzoni I."/>
            <person name="Caffarelli E."/>
        </authorList>
    </citation>
    <scope>FUNCTION</scope>
    <scope>CATALYTIC ACTIVITY</scope>
    <scope>SUBSTRATE SPECIFICITY</scope>
    <scope>RNA-BINDING</scope>
    <scope>COFACTOR</scope>
    <scope>MUTAGENESIS OF GLU-284; HIS-285; GLU-290; HIS-300 AND LYS-343</scope>
</reference>
<reference key="8">
    <citation type="journal article" date="2023" name="Nat. Commun.">
        <title>The endoribonuclease Arlr is required to maintain lipid homeostasis by downregulating lipolytic genes during aging.</title>
        <authorList>
            <person name="Sun X."/>
            <person name="Shen J."/>
            <person name="Perrimon N."/>
            <person name="Kong X."/>
            <person name="Wang D."/>
        </authorList>
    </citation>
    <scope>FUNCTION</scope>
</reference>
<proteinExistence type="evidence at protein level"/>
<feature type="signal peptide" evidence="6">
    <location>
        <begin position="1"/>
        <end position="18"/>
    </location>
</feature>
<feature type="chain" id="PRO_0000036405" description="Uridylate-specific endoribonuclease" evidence="2">
    <location>
        <begin position="19"/>
        <end position="410"/>
    </location>
</feature>
<feature type="domain" description="SMB 1" evidence="3">
    <location>
        <begin position="20"/>
        <end position="62"/>
    </location>
</feature>
<feature type="domain" description="SMB 2" evidence="3">
    <location>
        <begin position="86"/>
        <end position="130"/>
    </location>
</feature>
<feature type="domain" description="EndoU" evidence="4">
    <location>
        <begin position="137"/>
        <end position="410"/>
    </location>
</feature>
<feature type="active site" evidence="4">
    <location>
        <position position="285"/>
    </location>
</feature>
<feature type="active site" evidence="4">
    <location>
        <position position="300"/>
    </location>
</feature>
<feature type="active site" evidence="4">
    <location>
        <position position="343"/>
    </location>
</feature>
<feature type="disulfide bond" description="Alternate" evidence="3">
    <location>
        <begin position="24"/>
        <end position="40"/>
    </location>
</feature>
<feature type="disulfide bond" description="Alternate" evidence="3">
    <location>
        <begin position="24"/>
        <end position="28"/>
    </location>
</feature>
<feature type="disulfide bond" description="Alternate" evidence="3">
    <location>
        <begin position="28"/>
        <end position="58"/>
    </location>
</feature>
<feature type="disulfide bond" description="Alternate" evidence="3">
    <location>
        <begin position="38"/>
        <end position="51"/>
    </location>
</feature>
<feature type="disulfide bond" description="Alternate" evidence="3">
    <location>
        <begin position="38"/>
        <end position="40"/>
    </location>
</feature>
<feature type="disulfide bond" evidence="3">
    <location>
        <begin position="44"/>
        <end position="50"/>
    </location>
</feature>
<feature type="disulfide bond" description="Alternate" evidence="3">
    <location>
        <begin position="51"/>
        <end position="58"/>
    </location>
</feature>
<feature type="disulfide bond" description="Alternate" evidence="3">
    <location>
        <begin position="90"/>
        <end position="106"/>
    </location>
</feature>
<feature type="disulfide bond" description="Alternate" evidence="3">
    <location>
        <begin position="90"/>
        <end position="94"/>
    </location>
</feature>
<feature type="disulfide bond" description="Alternate" evidence="3">
    <location>
        <begin position="94"/>
        <end position="124"/>
    </location>
</feature>
<feature type="disulfide bond" description="Alternate" evidence="3">
    <location>
        <begin position="104"/>
        <end position="117"/>
    </location>
</feature>
<feature type="disulfide bond" description="Alternate" evidence="3">
    <location>
        <begin position="104"/>
        <end position="106"/>
    </location>
</feature>
<feature type="disulfide bond" evidence="3">
    <location>
        <begin position="110"/>
        <end position="116"/>
    </location>
</feature>
<feature type="disulfide bond" description="Alternate" evidence="3">
    <location>
        <begin position="117"/>
        <end position="124"/>
    </location>
</feature>
<feature type="splice variant" id="VSP_039215" description="In isoform 3." evidence="8">
    <original>GKIESCASRCNEKFNRDAACQCDRRCLWHGNCCEDYEHLCTEDHKESEPLPQLEEETEEALASN</original>
    <variation>D</variation>
    <location>
        <begin position="19"/>
        <end position="82"/>
    </location>
</feature>
<feature type="splice variant" id="VSP_039216" description="In isoform 2." evidence="8 9 10">
    <location>
        <begin position="19"/>
        <end position="59"/>
    </location>
</feature>
<feature type="mutagenesis site" description="Abolishes endoribonuclease activity and increases RNA-binding activity." evidence="5">
    <original>E</original>
    <variation>Q</variation>
    <location>
        <position position="284"/>
    </location>
</feature>
<feature type="mutagenesis site" description="Abolishes endoribonuclease activity without affecting RNA-binding activity." evidence="5">
    <original>H</original>
    <variation>A</variation>
    <location>
        <position position="285"/>
    </location>
</feature>
<feature type="mutagenesis site" description="Abolishes endoribonuclease activity without affecting RNA-binding activity." evidence="5">
    <original>E</original>
    <variation>Q</variation>
    <location>
        <position position="290"/>
    </location>
</feature>
<feature type="mutagenesis site" description="Abolishes endoribonuclease activity without affecting RNA-binding activity." evidence="5">
    <original>H</original>
    <variation>A</variation>
    <location>
        <position position="300"/>
    </location>
</feature>
<feature type="mutagenesis site" description="Strongly impairs endoribonuclease activity without affecting RNA-binding activity." evidence="5">
    <original>K</original>
    <variation>A</variation>
    <location>
        <position position="343"/>
    </location>
</feature>
<feature type="sequence conflict" description="In Ref. 2; BAG37240." evidence="11" ref="2">
    <original>L</original>
    <variation>P</variation>
    <location>
        <position position="123"/>
    </location>
</feature>
<feature type="sequence conflict" description="In Ref. 2; BAG37240." evidence="11" ref="2">
    <original>Y</original>
    <variation>H</variation>
    <location>
        <position position="387"/>
    </location>
</feature>
<gene>
    <name type="primary">ENDOU</name>
</gene>
<sequence>MRACISLVLAVLCGLAWAGKIESCASRCNEKFNRDAACQCDRRCLWHGNCCEDYEHLCTEDHKESEPLPQLEEETEEALASNLYSAPTSCQGRCYEAFDKHHQCHCNARCQEFGNCCKDFESLCSDHEVSHSSDAITKEEIQSISEKIYRADTNKAQKEDIVLNSQNCISPSETRNQVDRCPKPLFTYVNEKLFSKPTYAAFINLLNNYQRATGHGEHFSAQELAEQDAFLREIMKTAVMKELYSFLHHQNRYGSEQEFVDDLKNMWFGLYSRGNEEGDSSGFEHVFSGEVKKGKVTGFHNWIRFYLEEKEGLVDYYSHIYDGPWDSYPDVLAMQFNWDGYYKEVGSAFIGSSPEFEFALYSLCFIARPGKVCQLSLGGYPLAVRTYTWDKSTYGNGKKYIATAYIVSST</sequence>
<organism>
    <name type="scientific">Homo sapiens</name>
    <name type="common">Human</name>
    <dbReference type="NCBI Taxonomy" id="9606"/>
    <lineage>
        <taxon>Eukaryota</taxon>
        <taxon>Metazoa</taxon>
        <taxon>Chordata</taxon>
        <taxon>Craniata</taxon>
        <taxon>Vertebrata</taxon>
        <taxon>Euteleostomi</taxon>
        <taxon>Mammalia</taxon>
        <taxon>Eutheria</taxon>
        <taxon>Euarchontoglires</taxon>
        <taxon>Primates</taxon>
        <taxon>Haplorrhini</taxon>
        <taxon>Catarrhini</taxon>
        <taxon>Hominidae</taxon>
        <taxon>Homo</taxon>
    </lineage>
</organism>
<accession>P21128</accession>
<accession>B2RBJ3</accession>
<accession>B3KQS7</accession>
<accession>B7Z6E1</accession>
<accession>Q2NKJ4</accession>
<dbReference type="EC" id="3.1.-.-" evidence="4"/>
<dbReference type="EC" id="4.6.1.-" evidence="5"/>
<dbReference type="EMBL" id="M32402">
    <property type="protein sequence ID" value="AAA36464.1"/>
    <property type="molecule type" value="mRNA"/>
</dbReference>
<dbReference type="EMBL" id="M36109">
    <property type="protein sequence ID" value="AAA36465.1"/>
    <property type="molecule type" value="mRNA"/>
</dbReference>
<dbReference type="EMBL" id="AK075446">
    <property type="protein sequence ID" value="BAG52139.1"/>
    <property type="molecule type" value="mRNA"/>
</dbReference>
<dbReference type="EMBL" id="AK300169">
    <property type="protein sequence ID" value="BAH13227.1"/>
    <property type="molecule type" value="mRNA"/>
</dbReference>
<dbReference type="EMBL" id="AK314688">
    <property type="protein sequence ID" value="BAG37240.1"/>
    <property type="molecule type" value="mRNA"/>
</dbReference>
<dbReference type="EMBL" id="AC004241">
    <property type="status" value="NOT_ANNOTATED_CDS"/>
    <property type="molecule type" value="Genomic_DNA"/>
</dbReference>
<dbReference type="EMBL" id="CH471111">
    <property type="protein sequence ID" value="EAW57940.1"/>
    <property type="molecule type" value="Genomic_DNA"/>
</dbReference>
<dbReference type="EMBL" id="BC069715">
    <property type="protein sequence ID" value="AAH69715.1"/>
    <property type="molecule type" value="mRNA"/>
</dbReference>
<dbReference type="EMBL" id="BC074763">
    <property type="protein sequence ID" value="AAH74763.1"/>
    <property type="molecule type" value="mRNA"/>
</dbReference>
<dbReference type="EMBL" id="BC111782">
    <property type="protein sequence ID" value="AAI11783.1"/>
    <property type="molecule type" value="mRNA"/>
</dbReference>
<dbReference type="CCDS" id="CCDS53784.1">
    <molecule id="P21128-3"/>
</dbReference>
<dbReference type="CCDS" id="CCDS53785.1">
    <molecule id="P21128-1"/>
</dbReference>
<dbReference type="CCDS" id="CCDS8754.1">
    <molecule id="P21128-2"/>
</dbReference>
<dbReference type="PIR" id="A34614">
    <property type="entry name" value="A34614"/>
</dbReference>
<dbReference type="RefSeq" id="NP_001165910.1">
    <molecule id="P21128-1"/>
    <property type="nucleotide sequence ID" value="NM_001172439.2"/>
</dbReference>
<dbReference type="RefSeq" id="NP_001165911.1">
    <molecule id="P21128-3"/>
    <property type="nucleotide sequence ID" value="NM_001172440.2"/>
</dbReference>
<dbReference type="RefSeq" id="NP_006016.1">
    <molecule id="P21128-2"/>
    <property type="nucleotide sequence ID" value="NM_006025.4"/>
</dbReference>
<dbReference type="PDB" id="9FTW">
    <property type="method" value="X-ray"/>
    <property type="resolution" value="1.65 A"/>
    <property type="chains" value="A/B=1-410"/>
</dbReference>
<dbReference type="PDBsum" id="9FTW"/>
<dbReference type="SMR" id="P21128"/>
<dbReference type="BioGRID" id="114423">
    <property type="interactions" value="29"/>
</dbReference>
<dbReference type="FunCoup" id="P21128">
    <property type="interactions" value="117"/>
</dbReference>
<dbReference type="IntAct" id="P21128">
    <property type="interactions" value="23"/>
</dbReference>
<dbReference type="STRING" id="9606.ENSP00000397679"/>
<dbReference type="MEROPS" id="X41.001"/>
<dbReference type="iPTMnet" id="P21128"/>
<dbReference type="PhosphoSitePlus" id="P21128"/>
<dbReference type="BioMuta" id="ENDOU"/>
<dbReference type="DMDM" id="296434493"/>
<dbReference type="jPOST" id="P21128"/>
<dbReference type="MassIVE" id="P21128"/>
<dbReference type="PaxDb" id="9606-ENSP00000397679"/>
<dbReference type="PeptideAtlas" id="P21128"/>
<dbReference type="PRIDE" id="P21128"/>
<dbReference type="ProteomicsDB" id="53846">
    <molecule id="P21128-1"/>
</dbReference>
<dbReference type="ProteomicsDB" id="53847">
    <molecule id="P21128-2"/>
</dbReference>
<dbReference type="ProteomicsDB" id="53848">
    <molecule id="P21128-3"/>
</dbReference>
<dbReference type="TopDownProteomics" id="P21128-2">
    <molecule id="P21128-2"/>
</dbReference>
<dbReference type="Antibodypedia" id="2843">
    <property type="antibodies" value="52 antibodies from 19 providers"/>
</dbReference>
<dbReference type="DNASU" id="8909"/>
<dbReference type="Ensembl" id="ENST00000229003.7">
    <molecule id="P21128-2"/>
    <property type="protein sequence ID" value="ENSP00000229003.3"/>
    <property type="gene ID" value="ENSG00000111405.9"/>
</dbReference>
<dbReference type="Ensembl" id="ENST00000422538.8">
    <molecule id="P21128-1"/>
    <property type="protein sequence ID" value="ENSP00000397679.3"/>
    <property type="gene ID" value="ENSG00000111405.9"/>
</dbReference>
<dbReference type="Ensembl" id="ENST00000545824.2">
    <molecule id="P21128-3"/>
    <property type="protein sequence ID" value="ENSP00000445004.2"/>
    <property type="gene ID" value="ENSG00000111405.9"/>
</dbReference>
<dbReference type="GeneID" id="8909"/>
<dbReference type="KEGG" id="hsa:8909"/>
<dbReference type="MANE-Select" id="ENST00000422538.8">
    <property type="protein sequence ID" value="ENSP00000397679.3"/>
    <property type="RefSeq nucleotide sequence ID" value="NM_001172439.2"/>
    <property type="RefSeq protein sequence ID" value="NP_001165910.1"/>
</dbReference>
<dbReference type="UCSC" id="uc001rpt.3">
    <molecule id="P21128-1"/>
    <property type="organism name" value="human"/>
</dbReference>
<dbReference type="AGR" id="HGNC:14369"/>
<dbReference type="CTD" id="8909"/>
<dbReference type="DisGeNET" id="8909"/>
<dbReference type="GeneCards" id="ENDOU"/>
<dbReference type="HGNC" id="HGNC:14369">
    <property type="gene designation" value="ENDOU"/>
</dbReference>
<dbReference type="HPA" id="ENSG00000111405">
    <property type="expression patterns" value="Tissue enhanced (esophagus, vagina)"/>
</dbReference>
<dbReference type="MIM" id="606720">
    <property type="type" value="gene"/>
</dbReference>
<dbReference type="neXtProt" id="NX_P21128"/>
<dbReference type="OpenTargets" id="ENSG00000111405"/>
<dbReference type="PharmGKB" id="PA165512645"/>
<dbReference type="VEuPathDB" id="HostDB:ENSG00000111405"/>
<dbReference type="eggNOG" id="KOG2849">
    <property type="taxonomic scope" value="Eukaryota"/>
</dbReference>
<dbReference type="GeneTree" id="ENSGT00530000063825"/>
<dbReference type="HOGENOM" id="CLU_048034_0_0_1"/>
<dbReference type="InParanoid" id="P21128"/>
<dbReference type="OMA" id="PGRACHL"/>
<dbReference type="OrthoDB" id="430326at2759"/>
<dbReference type="PAN-GO" id="P21128">
    <property type="GO annotations" value="1 GO annotation based on evolutionary models"/>
</dbReference>
<dbReference type="PhylomeDB" id="P21128"/>
<dbReference type="TreeFam" id="TF319848"/>
<dbReference type="PathwayCommons" id="P21128"/>
<dbReference type="SignaLink" id="P21128"/>
<dbReference type="BioGRID-ORCS" id="8909">
    <property type="hits" value="15 hits in 1147 CRISPR screens"/>
</dbReference>
<dbReference type="GenomeRNAi" id="8909"/>
<dbReference type="Pharos" id="P21128">
    <property type="development level" value="Tbio"/>
</dbReference>
<dbReference type="PRO" id="PR:P21128"/>
<dbReference type="Proteomes" id="UP000005640">
    <property type="component" value="Chromosome 12"/>
</dbReference>
<dbReference type="RNAct" id="P21128">
    <property type="molecule type" value="protein"/>
</dbReference>
<dbReference type="Bgee" id="ENSG00000111405">
    <property type="expression patterns" value="Expressed in lower esophagus mucosa and 116 other cell types or tissues"/>
</dbReference>
<dbReference type="GO" id="GO:0005737">
    <property type="term" value="C:cytoplasm"/>
    <property type="evidence" value="ECO:0000314"/>
    <property type="project" value="UniProtKB"/>
</dbReference>
<dbReference type="GO" id="GO:0005576">
    <property type="term" value="C:extracellular region"/>
    <property type="evidence" value="ECO:0000304"/>
    <property type="project" value="UniProtKB"/>
</dbReference>
<dbReference type="GO" id="GO:0005615">
    <property type="term" value="C:extracellular space"/>
    <property type="evidence" value="ECO:0000304"/>
    <property type="project" value="ProtInc"/>
</dbReference>
<dbReference type="GO" id="GO:0005886">
    <property type="term" value="C:plasma membrane"/>
    <property type="evidence" value="ECO:0000304"/>
    <property type="project" value="UniProtKB"/>
</dbReference>
<dbReference type="GO" id="GO:0008083">
    <property type="term" value="F:growth factor activity"/>
    <property type="evidence" value="ECO:0000303"/>
    <property type="project" value="UniProtKB"/>
</dbReference>
<dbReference type="GO" id="GO:0016829">
    <property type="term" value="F:lyase activity"/>
    <property type="evidence" value="ECO:0007669"/>
    <property type="project" value="UniProtKB-KW"/>
</dbReference>
<dbReference type="GO" id="GO:0030145">
    <property type="term" value="F:manganese ion binding"/>
    <property type="evidence" value="ECO:0000304"/>
    <property type="project" value="UniProtKB"/>
</dbReference>
<dbReference type="GO" id="GO:0030247">
    <property type="term" value="F:polysaccharide binding"/>
    <property type="evidence" value="ECO:0007669"/>
    <property type="project" value="InterPro"/>
</dbReference>
<dbReference type="GO" id="GO:0003723">
    <property type="term" value="F:RNA binding"/>
    <property type="evidence" value="ECO:0000314"/>
    <property type="project" value="UniProtKB"/>
</dbReference>
<dbReference type="GO" id="GO:0004521">
    <property type="term" value="F:RNA endonuclease activity"/>
    <property type="evidence" value="ECO:0000314"/>
    <property type="project" value="UniProtKB"/>
</dbReference>
<dbReference type="GO" id="GO:0005044">
    <property type="term" value="F:scavenger receptor activity"/>
    <property type="evidence" value="ECO:0007669"/>
    <property type="project" value="InterPro"/>
</dbReference>
<dbReference type="GO" id="GO:0008236">
    <property type="term" value="F:serine-type peptidase activity"/>
    <property type="evidence" value="ECO:0000314"/>
    <property type="project" value="UniProtKB"/>
</dbReference>
<dbReference type="GO" id="GO:0007565">
    <property type="term" value="P:female pregnancy"/>
    <property type="evidence" value="ECO:0000270"/>
    <property type="project" value="UniProtKB"/>
</dbReference>
<dbReference type="GO" id="GO:0006955">
    <property type="term" value="P:immune response"/>
    <property type="evidence" value="ECO:0007669"/>
    <property type="project" value="InterPro"/>
</dbReference>
<dbReference type="GO" id="GO:0050995">
    <property type="term" value="P:negative regulation of lipid catabolic process"/>
    <property type="evidence" value="ECO:0000316"/>
    <property type="project" value="FlyBase"/>
</dbReference>
<dbReference type="GO" id="GO:0016441">
    <property type="term" value="P:post-transcriptional gene silencing"/>
    <property type="evidence" value="ECO:0000316"/>
    <property type="project" value="FlyBase"/>
</dbReference>
<dbReference type="GO" id="GO:0006508">
    <property type="term" value="P:proteolysis"/>
    <property type="evidence" value="ECO:0000314"/>
    <property type="project" value="UniProtKB"/>
</dbReference>
<dbReference type="CDD" id="cd21159">
    <property type="entry name" value="XendoU"/>
    <property type="match status" value="1"/>
</dbReference>
<dbReference type="FunFam" id="4.10.410.20:FF:000005">
    <property type="entry name" value="Endonuclease, poly(U) specific"/>
    <property type="match status" value="1"/>
</dbReference>
<dbReference type="FunFam" id="4.10.410.20:FF:000007">
    <property type="entry name" value="Poly(U)-specific endoribonuclease"/>
    <property type="match status" value="1"/>
</dbReference>
<dbReference type="Gene3D" id="4.10.410.20">
    <property type="match status" value="2"/>
</dbReference>
<dbReference type="InterPro" id="IPR039787">
    <property type="entry name" value="ENDOU"/>
</dbReference>
<dbReference type="InterPro" id="IPR037227">
    <property type="entry name" value="EndoU-like"/>
</dbReference>
<dbReference type="InterPro" id="IPR018998">
    <property type="entry name" value="EndoU_C"/>
</dbReference>
<dbReference type="InterPro" id="IPR020436">
    <property type="entry name" value="SMB_chordata"/>
</dbReference>
<dbReference type="InterPro" id="IPR036024">
    <property type="entry name" value="Somatomedin_B-like_dom_sf"/>
</dbReference>
<dbReference type="InterPro" id="IPR001212">
    <property type="entry name" value="Somatomedin_B_dom"/>
</dbReference>
<dbReference type="PANTHER" id="PTHR12439">
    <property type="entry name" value="PLACENTAL PROTEIN 11-RELATED"/>
    <property type="match status" value="1"/>
</dbReference>
<dbReference type="PANTHER" id="PTHR12439:SF40">
    <property type="entry name" value="URIDYLATE-SPECIFIC ENDORIBONUCLEASE"/>
    <property type="match status" value="1"/>
</dbReference>
<dbReference type="Pfam" id="PF01033">
    <property type="entry name" value="Somatomedin_B"/>
    <property type="match status" value="2"/>
</dbReference>
<dbReference type="Pfam" id="PF09412">
    <property type="entry name" value="XendoU"/>
    <property type="match status" value="1"/>
</dbReference>
<dbReference type="PRINTS" id="PR00022">
    <property type="entry name" value="SOMATOMEDINB"/>
</dbReference>
<dbReference type="SMART" id="SM00201">
    <property type="entry name" value="SO"/>
    <property type="match status" value="2"/>
</dbReference>
<dbReference type="SUPFAM" id="SSF142877">
    <property type="entry name" value="EndoU-like"/>
    <property type="match status" value="1"/>
</dbReference>
<dbReference type="SUPFAM" id="SSF90188">
    <property type="entry name" value="Somatomedin B domain"/>
    <property type="match status" value="2"/>
</dbReference>
<dbReference type="PROSITE" id="PS51959">
    <property type="entry name" value="ENDOU"/>
    <property type="match status" value="1"/>
</dbReference>
<dbReference type="PROSITE" id="PS00524">
    <property type="entry name" value="SMB_1"/>
    <property type="match status" value="2"/>
</dbReference>
<dbReference type="PROSITE" id="PS50958">
    <property type="entry name" value="SMB_2"/>
    <property type="match status" value="2"/>
</dbReference>
<name>ENDOU_HUMAN</name>
<keyword id="KW-0002">3D-structure</keyword>
<keyword id="KW-0025">Alternative splicing</keyword>
<keyword id="KW-0903">Direct protein sequencing</keyword>
<keyword id="KW-1015">Disulfide bond</keyword>
<keyword id="KW-0255">Endonuclease</keyword>
<keyword id="KW-0378">Hydrolase</keyword>
<keyword id="KW-0456">Lyase</keyword>
<keyword id="KW-0464">Manganese</keyword>
<keyword id="KW-0479">Metal-binding</keyword>
<keyword id="KW-0540">Nuclease</keyword>
<keyword id="KW-1267">Proteomics identification</keyword>
<keyword id="KW-1185">Reference proteome</keyword>
<keyword id="KW-0677">Repeat</keyword>
<keyword id="KW-0694">RNA-binding</keyword>
<keyword id="KW-0964">Secreted</keyword>
<keyword id="KW-0732">Signal</keyword>
<evidence type="ECO:0000250" key="1"/>
<evidence type="ECO:0000255" key="2"/>
<evidence type="ECO:0000255" key="3">
    <source>
        <dbReference type="PROSITE-ProRule" id="PRU00350"/>
    </source>
</evidence>
<evidence type="ECO:0000255" key="4">
    <source>
        <dbReference type="PROSITE-ProRule" id="PRU01304"/>
    </source>
</evidence>
<evidence type="ECO:0000269" key="5">
    <source>
    </source>
</evidence>
<evidence type="ECO:0000269" key="6">
    <source>
    </source>
</evidence>
<evidence type="ECO:0000269" key="7">
    <source>
    </source>
</evidence>
<evidence type="ECO:0000303" key="8">
    <source>
    </source>
</evidence>
<evidence type="ECO:0000303" key="9">
    <source>
    </source>
</evidence>
<evidence type="ECO:0000303" key="10">
    <source>
    </source>
</evidence>
<evidence type="ECO:0000305" key="11"/>
<evidence type="ECO:0000305" key="12">
    <source>
    </source>
</evidence>
<evidence type="ECO:0000305" key="13">
    <source>
    </source>
</evidence>